<sequence>MNPSTAQARVVVDELVRGGVHDVVLCPGSRNAPLAFALADADRAGRLRLHVRIDERTAGFLAIGLAVADRAPVCVAMTSGTAVANLGPAVVEANYARVPLIVLSANRPYELLGTGANQTFEQLGYFGNQVRANISLGLAPELSSGSPGDMTSLNAQWRSATCRVVVAATGSRSANAGPVQFDIPLREPLVPTFDDDGSCPPGRPDGKPWTHTPPVTFDQPLDIDLTPDTVVIAGHGAGVHPNLADLPTVAEPTAPPAANPLHPMALRLLRPKQVIMLGRPTLHRPVSALLADPSVPVYALTTGPRWPDVSGNSQATGTRAVTSGTPDPAWLRRCKEVNDHAVAAVREQLAAHPLTTGLHVAAAVADAVRPGDQLVLGASNPVRDAALVGFTPHGVQVRSNRGVAGIDGTVSTAIGAALAHDRTGGRTIALMGDLTFVHDSSGLLIGPTEPTPRNLTIVVSNDNGGGIFELLEQGDPRFSDVSSRVFGTPHDVDVGALCRAYHVDNRQIEVGQLADALDEPHEGMRVLEVKADRSSLRALHASIKAAL</sequence>
<comment type="function">
    <text evidence="1">Catalyzes the thiamine diphosphate-dependent decarboxylation of 2-oxoglutarate and the subsequent addition of the resulting succinic semialdehyde-thiamine pyrophosphate anion to isochorismate to yield 2-succinyl-5-enolpyruvyl-6-hydroxy-3-cyclohexene-1-carboxylate (SEPHCHC).</text>
</comment>
<comment type="catalytic activity">
    <reaction evidence="1">
        <text>isochorismate + 2-oxoglutarate + H(+) = 5-enolpyruvoyl-6-hydroxy-2-succinyl-cyclohex-3-ene-1-carboxylate + CO2</text>
        <dbReference type="Rhea" id="RHEA:25593"/>
        <dbReference type="ChEBI" id="CHEBI:15378"/>
        <dbReference type="ChEBI" id="CHEBI:16526"/>
        <dbReference type="ChEBI" id="CHEBI:16810"/>
        <dbReference type="ChEBI" id="CHEBI:29780"/>
        <dbReference type="ChEBI" id="CHEBI:58818"/>
        <dbReference type="EC" id="2.2.1.9"/>
    </reaction>
</comment>
<comment type="cofactor">
    <cofactor evidence="1">
        <name>Mg(2+)</name>
        <dbReference type="ChEBI" id="CHEBI:18420"/>
    </cofactor>
    <cofactor evidence="1">
        <name>Mn(2+)</name>
        <dbReference type="ChEBI" id="CHEBI:29035"/>
    </cofactor>
</comment>
<comment type="cofactor">
    <cofactor evidence="1">
        <name>thiamine diphosphate</name>
        <dbReference type="ChEBI" id="CHEBI:58937"/>
    </cofactor>
    <text evidence="1">Binds 1 thiamine pyrophosphate per subunit.</text>
</comment>
<comment type="pathway">
    <text evidence="1">Quinol/quinone metabolism; 1,4-dihydroxy-2-naphthoate biosynthesis; 1,4-dihydroxy-2-naphthoate from chorismate: step 2/7.</text>
</comment>
<comment type="pathway">
    <text evidence="1">Quinol/quinone metabolism; menaquinone biosynthesis.</text>
</comment>
<comment type="subunit">
    <text evidence="1">Homodimer.</text>
</comment>
<comment type="similarity">
    <text evidence="1">Belongs to the TPP enzyme family. MenD subfamily.</text>
</comment>
<feature type="chain" id="PRO_0000341782" description="2-succinyl-5-enolpyruvyl-6-hydroxy-3-cyclohexene-1-carboxylate synthase">
    <location>
        <begin position="1"/>
        <end position="547"/>
    </location>
</feature>
<gene>
    <name evidence="1" type="primary">menD</name>
    <name type="ordered locus">Mkms_0765</name>
</gene>
<keyword id="KW-0460">Magnesium</keyword>
<keyword id="KW-0464">Manganese</keyword>
<keyword id="KW-0474">Menaquinone biosynthesis</keyword>
<keyword id="KW-0479">Metal-binding</keyword>
<keyword id="KW-0786">Thiamine pyrophosphate</keyword>
<keyword id="KW-0808">Transferase</keyword>
<accession>A1UAX3</accession>
<dbReference type="EC" id="2.2.1.9" evidence="1"/>
<dbReference type="EMBL" id="CP000518">
    <property type="protein sequence ID" value="ABL89981.1"/>
    <property type="molecule type" value="Genomic_DNA"/>
</dbReference>
<dbReference type="SMR" id="A1UAX3"/>
<dbReference type="STRING" id="189918.Mkms_0765"/>
<dbReference type="KEGG" id="mkm:Mkms_0765"/>
<dbReference type="HOGENOM" id="CLU_006051_4_1_11"/>
<dbReference type="OrthoDB" id="9791859at2"/>
<dbReference type="UniPathway" id="UPA00079"/>
<dbReference type="UniPathway" id="UPA01057">
    <property type="reaction ID" value="UER00164"/>
</dbReference>
<dbReference type="GO" id="GO:0070204">
    <property type="term" value="F:2-succinyl-5-enolpyruvyl-6-hydroxy-3-cyclohexene-1-carboxylic-acid synthase activity"/>
    <property type="evidence" value="ECO:0007669"/>
    <property type="project" value="UniProtKB-UniRule"/>
</dbReference>
<dbReference type="GO" id="GO:0000287">
    <property type="term" value="F:magnesium ion binding"/>
    <property type="evidence" value="ECO:0007669"/>
    <property type="project" value="UniProtKB-UniRule"/>
</dbReference>
<dbReference type="GO" id="GO:0030145">
    <property type="term" value="F:manganese ion binding"/>
    <property type="evidence" value="ECO:0007669"/>
    <property type="project" value="UniProtKB-UniRule"/>
</dbReference>
<dbReference type="GO" id="GO:0030976">
    <property type="term" value="F:thiamine pyrophosphate binding"/>
    <property type="evidence" value="ECO:0007669"/>
    <property type="project" value="UniProtKB-UniRule"/>
</dbReference>
<dbReference type="GO" id="GO:0009234">
    <property type="term" value="P:menaquinone biosynthetic process"/>
    <property type="evidence" value="ECO:0007669"/>
    <property type="project" value="UniProtKB-UniRule"/>
</dbReference>
<dbReference type="CDD" id="cd07037">
    <property type="entry name" value="TPP_PYR_MenD"/>
    <property type="match status" value="1"/>
</dbReference>
<dbReference type="CDD" id="cd02009">
    <property type="entry name" value="TPP_SHCHC_synthase"/>
    <property type="match status" value="1"/>
</dbReference>
<dbReference type="Gene3D" id="3.40.50.970">
    <property type="match status" value="2"/>
</dbReference>
<dbReference type="Gene3D" id="3.40.50.1220">
    <property type="entry name" value="TPP-binding domain"/>
    <property type="match status" value="1"/>
</dbReference>
<dbReference type="HAMAP" id="MF_01659">
    <property type="entry name" value="MenD"/>
    <property type="match status" value="1"/>
</dbReference>
<dbReference type="InterPro" id="IPR004433">
    <property type="entry name" value="MenaQ_synth_MenD"/>
</dbReference>
<dbReference type="InterPro" id="IPR029061">
    <property type="entry name" value="THDP-binding"/>
</dbReference>
<dbReference type="InterPro" id="IPR012001">
    <property type="entry name" value="Thiamin_PyroP_enz_TPP-bd_dom"/>
</dbReference>
<dbReference type="NCBIfam" id="TIGR00173">
    <property type="entry name" value="menD"/>
    <property type="match status" value="1"/>
</dbReference>
<dbReference type="PANTHER" id="PTHR42916">
    <property type="entry name" value="2-SUCCINYL-5-ENOLPYRUVYL-6-HYDROXY-3-CYCLOHEXENE-1-CARBOXYLATE SYNTHASE"/>
    <property type="match status" value="1"/>
</dbReference>
<dbReference type="PANTHER" id="PTHR42916:SF1">
    <property type="entry name" value="PROTEIN PHYLLO, CHLOROPLASTIC"/>
    <property type="match status" value="1"/>
</dbReference>
<dbReference type="Pfam" id="PF02776">
    <property type="entry name" value="TPP_enzyme_N"/>
    <property type="match status" value="1"/>
</dbReference>
<dbReference type="PIRSF" id="PIRSF004983">
    <property type="entry name" value="MenD"/>
    <property type="match status" value="1"/>
</dbReference>
<dbReference type="SUPFAM" id="SSF52518">
    <property type="entry name" value="Thiamin diphosphate-binding fold (THDP-binding)"/>
    <property type="match status" value="2"/>
</dbReference>
<evidence type="ECO:0000255" key="1">
    <source>
        <dbReference type="HAMAP-Rule" id="MF_01659"/>
    </source>
</evidence>
<name>MEND_MYCSK</name>
<organism>
    <name type="scientific">Mycobacterium sp. (strain KMS)</name>
    <dbReference type="NCBI Taxonomy" id="189918"/>
    <lineage>
        <taxon>Bacteria</taxon>
        <taxon>Bacillati</taxon>
        <taxon>Actinomycetota</taxon>
        <taxon>Actinomycetes</taxon>
        <taxon>Mycobacteriales</taxon>
        <taxon>Mycobacteriaceae</taxon>
        <taxon>Mycobacterium</taxon>
    </lineage>
</organism>
<proteinExistence type="inferred from homology"/>
<protein>
    <recommendedName>
        <fullName evidence="1">2-succinyl-5-enolpyruvyl-6-hydroxy-3-cyclohexene-1-carboxylate synthase</fullName>
        <shortName evidence="1">SEPHCHC synthase</shortName>
        <ecNumber evidence="1">2.2.1.9</ecNumber>
    </recommendedName>
    <alternativeName>
        <fullName evidence="1">Menaquinone biosynthesis protein MenD</fullName>
    </alternativeName>
</protein>
<reference key="1">
    <citation type="submission" date="2006-12" db="EMBL/GenBank/DDBJ databases">
        <title>Complete sequence of chromosome of Mycobacterium sp. KMS.</title>
        <authorList>
            <consortium name="US DOE Joint Genome Institute"/>
            <person name="Copeland A."/>
            <person name="Lucas S."/>
            <person name="Lapidus A."/>
            <person name="Barry K."/>
            <person name="Detter J.C."/>
            <person name="Glavina del Rio T."/>
            <person name="Hammon N."/>
            <person name="Israni S."/>
            <person name="Dalin E."/>
            <person name="Tice H."/>
            <person name="Pitluck S."/>
            <person name="Kiss H."/>
            <person name="Brettin T."/>
            <person name="Bruce D."/>
            <person name="Han C."/>
            <person name="Tapia R."/>
            <person name="Gilna P."/>
            <person name="Schmutz J."/>
            <person name="Larimer F."/>
            <person name="Land M."/>
            <person name="Hauser L."/>
            <person name="Kyrpides N."/>
            <person name="Mikhailova N."/>
            <person name="Miller C.D."/>
            <person name="Richardson P."/>
        </authorList>
    </citation>
    <scope>NUCLEOTIDE SEQUENCE [LARGE SCALE GENOMIC DNA]</scope>
    <source>
        <strain>KMS</strain>
    </source>
</reference>